<evidence type="ECO:0000250" key="1">
    <source>
        <dbReference type="UniProtKB" id="Q06053"/>
    </source>
</evidence>
<evidence type="ECO:0000250" key="2">
    <source>
        <dbReference type="UniProtKB" id="Q5SMC7"/>
    </source>
</evidence>
<evidence type="ECO:0000250" key="3">
    <source>
        <dbReference type="UniProtKB" id="Q91XI1"/>
    </source>
</evidence>
<evidence type="ECO:0000250" key="4">
    <source>
        <dbReference type="UniProtKB" id="Q96G46"/>
    </source>
</evidence>
<evidence type="ECO:0000250" key="5">
    <source>
        <dbReference type="UniProtKB" id="Q9UTH9"/>
    </source>
</evidence>
<evidence type="ECO:0000255" key="6">
    <source>
        <dbReference type="PROSITE-ProRule" id="PRU00723"/>
    </source>
</evidence>
<evidence type="ECO:0000256" key="7">
    <source>
        <dbReference type="SAM" id="MobiDB-lite"/>
    </source>
</evidence>
<evidence type="ECO:0000305" key="8"/>
<evidence type="ECO:0000312" key="9">
    <source>
        <dbReference type="RGD" id="1563228"/>
    </source>
</evidence>
<sequence>MAEVAEVAAESGGGGDSGVGACERGVAPIKAQYRTTKERFHEYLDADKQEGACQETPTEGPAEPEAKRIRLEDGQENGKTEVAVESHERQVPKRARGQNKSRPHMKPAHYDKERLCPSLLQESATPCAFGDRCRFLHDVGRYLETKPADLGPHCVLFNTFGRCPYSMTCRFAGAHLGPEGQNLVQEEVVARCAQLPSVRNGLDRALQQQLRKRQVCFERAEQALSHLTQGPMPTIAPESTVATLTPKHSSCHVQLDNVGGDGARQGSPVPTCGPLTDEDVVRLRPCEKKRLDISGKLYLAPLTTCGNLPFRRICKRFGADVTCGEMAMCTNLLQGQMSEWALLKRHPCEDIFGVQLEGAFPDTMTKCAELLNRTIDVDFVDINVGCPIDLVYKKGGGCALMNRSAKFQQIVRGMNEVLDVPLTVKMRTGVQERVSLAHRLLPELRNWGVALVTLHGRSREQRYTRLADWPYIEQCAKVASPMPLFGNGDILSFEDANCAMQTGVAGIMVARGALLKPWLFTEIKEQRHWDISSSERLDILRDFTHYGLEHWGSDTQGVERTRRFLLEWLSFLCRYVPVGLLERLPQRINERPPYYLGRDYLETLMASQQAADWIRISEMLLGPVPPGFVFLPKHKANAYK</sequence>
<dbReference type="EC" id="1.3.1.89" evidence="1"/>
<dbReference type="EC" id="1.3.1.-" evidence="1"/>
<dbReference type="EMBL" id="BC105780">
    <property type="protein sequence ID" value="AAI05781.1"/>
    <property type="molecule type" value="mRNA"/>
</dbReference>
<dbReference type="RefSeq" id="NP_001030095.1">
    <property type="nucleotide sequence ID" value="NM_001034923.1"/>
</dbReference>
<dbReference type="SMR" id="Q3KRC5"/>
<dbReference type="FunCoup" id="Q3KRC5">
    <property type="interactions" value="1871"/>
</dbReference>
<dbReference type="STRING" id="10116.ENSRNOP00000066698"/>
<dbReference type="iPTMnet" id="Q3KRC5"/>
<dbReference type="PhosphoSitePlus" id="Q3KRC5"/>
<dbReference type="jPOST" id="Q3KRC5"/>
<dbReference type="PaxDb" id="10116-ENSRNOP00000066698"/>
<dbReference type="GeneID" id="301122"/>
<dbReference type="KEGG" id="rno:301122"/>
<dbReference type="AGR" id="RGD:1563228"/>
<dbReference type="CTD" id="56931"/>
<dbReference type="RGD" id="1563228">
    <property type="gene designation" value="Dus3l"/>
</dbReference>
<dbReference type="eggNOG" id="KOG2333">
    <property type="taxonomic scope" value="Eukaryota"/>
</dbReference>
<dbReference type="InParanoid" id="Q3KRC5"/>
<dbReference type="OrthoDB" id="259935at2759"/>
<dbReference type="PhylomeDB" id="Q3KRC5"/>
<dbReference type="PRO" id="PR:Q3KRC5"/>
<dbReference type="Proteomes" id="UP000002494">
    <property type="component" value="Unplaced"/>
</dbReference>
<dbReference type="GO" id="GO:0050660">
    <property type="term" value="F:flavin adenine dinucleotide binding"/>
    <property type="evidence" value="ECO:0007669"/>
    <property type="project" value="InterPro"/>
</dbReference>
<dbReference type="GO" id="GO:0106414">
    <property type="term" value="F:mRNA dihydrouridine synthase activity"/>
    <property type="evidence" value="ECO:0000266"/>
    <property type="project" value="RGD"/>
</dbReference>
<dbReference type="GO" id="GO:0017150">
    <property type="term" value="F:tRNA dihydrouridine synthase activity"/>
    <property type="evidence" value="ECO:0000318"/>
    <property type="project" value="GO_Central"/>
</dbReference>
<dbReference type="GO" id="GO:0102265">
    <property type="term" value="F:tRNA-dihydrouridine47 synthase activity"/>
    <property type="evidence" value="ECO:0000250"/>
    <property type="project" value="UniProtKB"/>
</dbReference>
<dbReference type="GO" id="GO:0008270">
    <property type="term" value="F:zinc ion binding"/>
    <property type="evidence" value="ECO:0007669"/>
    <property type="project" value="UniProtKB-KW"/>
</dbReference>
<dbReference type="GO" id="GO:0006397">
    <property type="term" value="P:mRNA processing"/>
    <property type="evidence" value="ECO:0007669"/>
    <property type="project" value="UniProtKB-KW"/>
</dbReference>
<dbReference type="GO" id="GO:0006417">
    <property type="term" value="P:regulation of translation"/>
    <property type="evidence" value="ECO:0000250"/>
    <property type="project" value="UniProtKB"/>
</dbReference>
<dbReference type="GO" id="GO:0002943">
    <property type="term" value="P:tRNA dihydrouridine synthesis"/>
    <property type="evidence" value="ECO:0000250"/>
    <property type="project" value="UniProtKB"/>
</dbReference>
<dbReference type="CDD" id="cd02801">
    <property type="entry name" value="DUS_like_FMN"/>
    <property type="match status" value="1"/>
</dbReference>
<dbReference type="FunFam" id="3.20.20.70:FF:000067">
    <property type="entry name" value="tRNA-dihydrouridine(47) synthase [NAD(P)(+)]"/>
    <property type="match status" value="1"/>
</dbReference>
<dbReference type="FunFam" id="4.10.1000.10:FF:000029">
    <property type="entry name" value="tRNA-dihydrouridine(47) synthase [NAD(P)(+)]"/>
    <property type="match status" value="1"/>
</dbReference>
<dbReference type="Gene3D" id="3.20.20.70">
    <property type="entry name" value="Aldolase class I"/>
    <property type="match status" value="1"/>
</dbReference>
<dbReference type="Gene3D" id="4.10.1000.10">
    <property type="entry name" value="Zinc finger, CCCH-type"/>
    <property type="match status" value="1"/>
</dbReference>
<dbReference type="InterPro" id="IPR013785">
    <property type="entry name" value="Aldolase_TIM"/>
</dbReference>
<dbReference type="InterPro" id="IPR035587">
    <property type="entry name" value="DUS-like_FMN-bd"/>
</dbReference>
<dbReference type="InterPro" id="IPR018517">
    <property type="entry name" value="tRNA_hU_synthase_CS"/>
</dbReference>
<dbReference type="InterPro" id="IPR000571">
    <property type="entry name" value="Znf_CCCH"/>
</dbReference>
<dbReference type="PANTHER" id="PTHR45846">
    <property type="entry name" value="TRNA-DIHYDROURIDINE(47) SYNTHASE [NAD(P)(+)]-LIKE"/>
    <property type="match status" value="1"/>
</dbReference>
<dbReference type="PANTHER" id="PTHR45846:SF1">
    <property type="entry name" value="TRNA-DIHYDROURIDINE(47) SYNTHASE [NAD(P)(+)]-LIKE"/>
    <property type="match status" value="1"/>
</dbReference>
<dbReference type="Pfam" id="PF01207">
    <property type="entry name" value="Dus"/>
    <property type="match status" value="1"/>
</dbReference>
<dbReference type="SUPFAM" id="SSF51395">
    <property type="entry name" value="FMN-linked oxidoreductases"/>
    <property type="match status" value="1"/>
</dbReference>
<dbReference type="PROSITE" id="PS01136">
    <property type="entry name" value="UPF0034"/>
    <property type="match status" value="1"/>
</dbReference>
<dbReference type="PROSITE" id="PS50103">
    <property type="entry name" value="ZF_C3H1"/>
    <property type="match status" value="2"/>
</dbReference>
<accession>Q3KRC5</accession>
<proteinExistence type="evidence at transcript level"/>
<organism>
    <name type="scientific">Rattus norvegicus</name>
    <name type="common">Rat</name>
    <dbReference type="NCBI Taxonomy" id="10116"/>
    <lineage>
        <taxon>Eukaryota</taxon>
        <taxon>Metazoa</taxon>
        <taxon>Chordata</taxon>
        <taxon>Craniata</taxon>
        <taxon>Vertebrata</taxon>
        <taxon>Euteleostomi</taxon>
        <taxon>Mammalia</taxon>
        <taxon>Eutheria</taxon>
        <taxon>Euarchontoglires</taxon>
        <taxon>Glires</taxon>
        <taxon>Rodentia</taxon>
        <taxon>Myomorpha</taxon>
        <taxon>Muroidea</taxon>
        <taxon>Muridae</taxon>
        <taxon>Murinae</taxon>
        <taxon>Rattus</taxon>
    </lineage>
</organism>
<keyword id="KW-0007">Acetylation</keyword>
<keyword id="KW-0285">Flavoprotein</keyword>
<keyword id="KW-0288">FMN</keyword>
<keyword id="KW-1017">Isopeptide bond</keyword>
<keyword id="KW-0479">Metal-binding</keyword>
<keyword id="KW-0507">mRNA processing</keyword>
<keyword id="KW-0520">NAD</keyword>
<keyword id="KW-0521">NADP</keyword>
<keyword id="KW-0560">Oxidoreductase</keyword>
<keyword id="KW-0597">Phosphoprotein</keyword>
<keyword id="KW-1185">Reference proteome</keyword>
<keyword id="KW-0677">Repeat</keyword>
<keyword id="KW-0819">tRNA processing</keyword>
<keyword id="KW-0832">Ubl conjugation</keyword>
<keyword id="KW-0862">Zinc</keyword>
<keyword id="KW-0863">Zinc-finger</keyword>
<reference key="1">
    <citation type="journal article" date="2004" name="Genome Res.">
        <title>The status, quality, and expansion of the NIH full-length cDNA project: the Mammalian Gene Collection (MGC).</title>
        <authorList>
            <consortium name="The MGC Project Team"/>
        </authorList>
    </citation>
    <scope>NUCLEOTIDE SEQUENCE [LARGE SCALE MRNA]</scope>
    <source>
        <tissue>Prostate</tissue>
    </source>
</reference>
<protein>
    <recommendedName>
        <fullName evidence="8">tRNA-dihydrouridine(47) synthase [NAD(P)(+)]-like</fullName>
        <ecNumber evidence="1">1.3.1.89</ecNumber>
    </recommendedName>
    <alternativeName>
        <fullName evidence="8">mRNA-dihydrouridine synthase DUS3L</fullName>
        <ecNumber evidence="1">1.3.1.-</ecNumber>
    </alternativeName>
    <alternativeName>
        <fullName>tRNA-dihydrouridine synthase 3-like</fullName>
    </alternativeName>
</protein>
<name>DUS3L_RAT</name>
<gene>
    <name evidence="9" type="primary">Dus3l</name>
</gene>
<feature type="initiator methionine" description="Removed" evidence="4">
    <location>
        <position position="1"/>
    </location>
</feature>
<feature type="chain" id="PRO_0000247344" description="tRNA-dihydrouridine(47) synthase [NAD(P)(+)]-like">
    <location>
        <begin position="2"/>
        <end position="640"/>
    </location>
</feature>
<feature type="zinc finger region" description="C3H1-type 1" evidence="6">
    <location>
        <begin position="110"/>
        <end position="140"/>
    </location>
</feature>
<feature type="zinc finger region" description="C3H1-type 2" evidence="6">
    <location>
        <begin position="148"/>
        <end position="178"/>
    </location>
</feature>
<feature type="region of interest" description="Disordered" evidence="7">
    <location>
        <begin position="1"/>
        <end position="22"/>
    </location>
</feature>
<feature type="region of interest" description="Disordered" evidence="7">
    <location>
        <begin position="47"/>
        <end position="106"/>
    </location>
</feature>
<feature type="compositionally biased region" description="Low complexity" evidence="7">
    <location>
        <begin position="1"/>
        <end position="10"/>
    </location>
</feature>
<feature type="compositionally biased region" description="Basic and acidic residues" evidence="7">
    <location>
        <begin position="64"/>
        <end position="91"/>
    </location>
</feature>
<feature type="compositionally biased region" description="Basic residues" evidence="7">
    <location>
        <begin position="92"/>
        <end position="106"/>
    </location>
</feature>
<feature type="active site" description="Proton donor" evidence="2">
    <location>
        <position position="386"/>
    </location>
</feature>
<feature type="binding site" evidence="2">
    <location>
        <begin position="301"/>
        <end position="303"/>
    </location>
    <ligand>
        <name>FMN</name>
        <dbReference type="ChEBI" id="CHEBI:58210"/>
    </ligand>
</feature>
<feature type="binding site" evidence="2">
    <location>
        <position position="355"/>
    </location>
    <ligand>
        <name>FMN</name>
        <dbReference type="ChEBI" id="CHEBI:58210"/>
    </ligand>
</feature>
<feature type="binding site" evidence="2">
    <location>
        <position position="425"/>
    </location>
    <ligand>
        <name>FMN</name>
        <dbReference type="ChEBI" id="CHEBI:58210"/>
    </ligand>
</feature>
<feature type="binding site" evidence="2">
    <location>
        <position position="455"/>
    </location>
    <ligand>
        <name>FMN</name>
        <dbReference type="ChEBI" id="CHEBI:58210"/>
    </ligand>
</feature>
<feature type="binding site" evidence="2">
    <location>
        <begin position="487"/>
        <end position="489"/>
    </location>
    <ligand>
        <name>FMN</name>
        <dbReference type="ChEBI" id="CHEBI:58210"/>
    </ligand>
</feature>
<feature type="binding site" evidence="2">
    <location>
        <begin position="510"/>
        <end position="511"/>
    </location>
    <ligand>
        <name>FMN</name>
        <dbReference type="ChEBI" id="CHEBI:58210"/>
    </ligand>
</feature>
<feature type="modified residue" description="N-acetylalanine" evidence="4">
    <location>
        <position position="2"/>
    </location>
</feature>
<feature type="modified residue" description="Phosphoserine" evidence="3">
    <location>
        <position position="267"/>
    </location>
</feature>
<feature type="cross-link" description="Glycyl lysine isopeptide (Lys-Gly) (interchain with G-Cter in SUMO2)" evidence="4">
    <location>
        <position position="406"/>
    </location>
</feature>
<comment type="function">
    <text evidence="4">Catalyzes the synthesis of dihydrouridine, a modified base, in various RNAs, such as tRNAs, mRNAs and some long non-coding RNAs (lncRNAs). Mainly modifies the uridine in position 47 (U47) in the D-loop of most cytoplasmic tRNAs. Also able to mediate the formation of dihydrouridine in some mRNAs, thereby regulating their translation.</text>
</comment>
<comment type="catalytic activity">
    <reaction evidence="1">
        <text>5,6-dihydrouridine(47) in tRNA + NAD(+) = uridine(47) in tRNA + NADH + H(+)</text>
        <dbReference type="Rhea" id="RHEA:53364"/>
        <dbReference type="Rhea" id="RHEA-COMP:13539"/>
        <dbReference type="Rhea" id="RHEA-COMP:13540"/>
        <dbReference type="ChEBI" id="CHEBI:15378"/>
        <dbReference type="ChEBI" id="CHEBI:57540"/>
        <dbReference type="ChEBI" id="CHEBI:57945"/>
        <dbReference type="ChEBI" id="CHEBI:65315"/>
        <dbReference type="ChEBI" id="CHEBI:74443"/>
        <dbReference type="EC" id="1.3.1.89"/>
    </reaction>
    <physiologicalReaction direction="right-to-left" evidence="1">
        <dbReference type="Rhea" id="RHEA:53366"/>
    </physiologicalReaction>
</comment>
<comment type="catalytic activity">
    <reaction evidence="1">
        <text>5,6-dihydrouridine(47) in tRNA + NADP(+) = uridine(47) in tRNA + NADPH + H(+)</text>
        <dbReference type="Rhea" id="RHEA:53360"/>
        <dbReference type="Rhea" id="RHEA-COMP:13539"/>
        <dbReference type="Rhea" id="RHEA-COMP:13540"/>
        <dbReference type="ChEBI" id="CHEBI:15378"/>
        <dbReference type="ChEBI" id="CHEBI:57783"/>
        <dbReference type="ChEBI" id="CHEBI:58349"/>
        <dbReference type="ChEBI" id="CHEBI:65315"/>
        <dbReference type="ChEBI" id="CHEBI:74443"/>
        <dbReference type="EC" id="1.3.1.89"/>
    </reaction>
    <physiologicalReaction direction="right-to-left" evidence="1">
        <dbReference type="Rhea" id="RHEA:53362"/>
    </physiologicalReaction>
</comment>
<comment type="catalytic activity">
    <reaction evidence="5">
        <text>a 5,6-dihydrouridine in mRNA + NAD(+) = a uridine in mRNA + NADH + H(+)</text>
        <dbReference type="Rhea" id="RHEA:69851"/>
        <dbReference type="Rhea" id="RHEA-COMP:14658"/>
        <dbReference type="Rhea" id="RHEA-COMP:17789"/>
        <dbReference type="ChEBI" id="CHEBI:15378"/>
        <dbReference type="ChEBI" id="CHEBI:57540"/>
        <dbReference type="ChEBI" id="CHEBI:57945"/>
        <dbReference type="ChEBI" id="CHEBI:65315"/>
        <dbReference type="ChEBI" id="CHEBI:74443"/>
    </reaction>
    <physiologicalReaction direction="right-to-left" evidence="5">
        <dbReference type="Rhea" id="RHEA:69853"/>
    </physiologicalReaction>
</comment>
<comment type="catalytic activity">
    <reaction evidence="5">
        <text>a 5,6-dihydrouridine in mRNA + NADP(+) = a uridine in mRNA + NADPH + H(+)</text>
        <dbReference type="Rhea" id="RHEA:69855"/>
        <dbReference type="Rhea" id="RHEA-COMP:14658"/>
        <dbReference type="Rhea" id="RHEA-COMP:17789"/>
        <dbReference type="ChEBI" id="CHEBI:15378"/>
        <dbReference type="ChEBI" id="CHEBI:57783"/>
        <dbReference type="ChEBI" id="CHEBI:58349"/>
        <dbReference type="ChEBI" id="CHEBI:65315"/>
        <dbReference type="ChEBI" id="CHEBI:74443"/>
    </reaction>
    <physiologicalReaction direction="right-to-left" evidence="5">
        <dbReference type="Rhea" id="RHEA:69857"/>
    </physiologicalReaction>
</comment>
<comment type="cofactor">
    <cofactor evidence="2">
        <name>FMN</name>
        <dbReference type="ChEBI" id="CHEBI:58210"/>
    </cofactor>
</comment>
<comment type="similarity">
    <text evidence="8">Belongs to the Dus family. Dus3 subfamily.</text>
</comment>